<comment type="function">
    <text evidence="1">Regulates arginine biosynthesis genes.</text>
</comment>
<comment type="pathway">
    <text>Amino-acid biosynthesis; L-arginine biosynthesis [regulation].</text>
</comment>
<comment type="subcellular location">
    <subcellularLocation>
        <location evidence="1">Cytoplasm</location>
    </subcellularLocation>
</comment>
<comment type="similarity">
    <text evidence="1">Belongs to the ArgR family.</text>
</comment>
<evidence type="ECO:0000255" key="1">
    <source>
        <dbReference type="HAMAP-Rule" id="MF_00173"/>
    </source>
</evidence>
<organism>
    <name type="scientific">Bacteroides thetaiotaomicron (strain ATCC 29148 / DSM 2079 / JCM 5827 / CCUG 10774 / NCTC 10582 / VPI-5482 / E50)</name>
    <dbReference type="NCBI Taxonomy" id="226186"/>
    <lineage>
        <taxon>Bacteria</taxon>
        <taxon>Pseudomonadati</taxon>
        <taxon>Bacteroidota</taxon>
        <taxon>Bacteroidia</taxon>
        <taxon>Bacteroidales</taxon>
        <taxon>Bacteroidaceae</taxon>
        <taxon>Bacteroides</taxon>
    </lineage>
</organism>
<proteinExistence type="inferred from homology"/>
<gene>
    <name evidence="1" type="primary">argR</name>
    <name type="ordered locus">BT_3762</name>
</gene>
<reference key="1">
    <citation type="journal article" date="2003" name="Science">
        <title>A genomic view of the human-Bacteroides thetaiotaomicron symbiosis.</title>
        <authorList>
            <person name="Xu J."/>
            <person name="Bjursell M.K."/>
            <person name="Himrod J."/>
            <person name="Deng S."/>
            <person name="Carmichael L.K."/>
            <person name="Chiang H.C."/>
            <person name="Hooper L.V."/>
            <person name="Gordon J.I."/>
        </authorList>
    </citation>
    <scope>NUCLEOTIDE SEQUENCE [LARGE SCALE GENOMIC DNA]</scope>
    <source>
        <strain>ATCC 29148 / DSM 2079 / JCM 5827 / CCUG 10774 / NCTC 10582 / VPI-5482 / E50</strain>
    </source>
</reference>
<feature type="chain" id="PRO_0000205073" description="Arginine repressor">
    <location>
        <begin position="1"/>
        <end position="157"/>
    </location>
</feature>
<protein>
    <recommendedName>
        <fullName evidence="1">Arginine repressor</fullName>
    </recommendedName>
</protein>
<sequence length="157" mass="17477">MKKKANRLDAIKMIISSKEVGSQEELLQELNREGFELTQATLSRDLKQLKVAKAASMNGKYVYVLPNNIMYKRSTDQSAGEMLRNNGFISLQFSGNIAVIRTRPGYASSMAYDIDNNEFSEILGTIAGDDTIMLVLREGVATSKVRQLLSLIIPNIE</sequence>
<name>ARGR_BACTN</name>
<keyword id="KW-0028">Amino-acid biosynthesis</keyword>
<keyword id="KW-0055">Arginine biosynthesis</keyword>
<keyword id="KW-0963">Cytoplasm</keyword>
<keyword id="KW-0238">DNA-binding</keyword>
<keyword id="KW-1185">Reference proteome</keyword>
<keyword id="KW-0678">Repressor</keyword>
<keyword id="KW-0804">Transcription</keyword>
<keyword id="KW-0805">Transcription regulation</keyword>
<dbReference type="EMBL" id="AE015928">
    <property type="protein sequence ID" value="AAO78867.1"/>
    <property type="molecule type" value="Genomic_DNA"/>
</dbReference>
<dbReference type="RefSeq" id="NP_812673.1">
    <property type="nucleotide sequence ID" value="NC_004663.1"/>
</dbReference>
<dbReference type="RefSeq" id="WP_008762699.1">
    <property type="nucleotide sequence ID" value="NC_004663.1"/>
</dbReference>
<dbReference type="SMR" id="Q8A1A4"/>
<dbReference type="FunCoup" id="Q8A1A4">
    <property type="interactions" value="76"/>
</dbReference>
<dbReference type="STRING" id="226186.BT_3762"/>
<dbReference type="PaxDb" id="226186-BT_3762"/>
<dbReference type="EnsemblBacteria" id="AAO78867">
    <property type="protein sequence ID" value="AAO78867"/>
    <property type="gene ID" value="BT_3762"/>
</dbReference>
<dbReference type="KEGG" id="bth:BT_3762"/>
<dbReference type="PATRIC" id="fig|226186.12.peg.3824"/>
<dbReference type="eggNOG" id="COG1438">
    <property type="taxonomic scope" value="Bacteria"/>
</dbReference>
<dbReference type="HOGENOM" id="CLU_097103_0_0_10"/>
<dbReference type="InParanoid" id="Q8A1A4"/>
<dbReference type="OrthoDB" id="9807089at2"/>
<dbReference type="UniPathway" id="UPA00068"/>
<dbReference type="Proteomes" id="UP000001414">
    <property type="component" value="Chromosome"/>
</dbReference>
<dbReference type="GO" id="GO:0005737">
    <property type="term" value="C:cytoplasm"/>
    <property type="evidence" value="ECO:0007669"/>
    <property type="project" value="UniProtKB-SubCell"/>
</dbReference>
<dbReference type="GO" id="GO:0005667">
    <property type="term" value="C:transcription regulator complex"/>
    <property type="evidence" value="ECO:0000318"/>
    <property type="project" value="GO_Central"/>
</dbReference>
<dbReference type="GO" id="GO:0034618">
    <property type="term" value="F:arginine binding"/>
    <property type="evidence" value="ECO:0007669"/>
    <property type="project" value="InterPro"/>
</dbReference>
<dbReference type="GO" id="GO:0000987">
    <property type="term" value="F:cis-regulatory region sequence-specific DNA binding"/>
    <property type="evidence" value="ECO:0000318"/>
    <property type="project" value="GO_Central"/>
</dbReference>
<dbReference type="GO" id="GO:0003700">
    <property type="term" value="F:DNA-binding transcription factor activity"/>
    <property type="evidence" value="ECO:0007669"/>
    <property type="project" value="UniProtKB-UniRule"/>
</dbReference>
<dbReference type="GO" id="GO:0006526">
    <property type="term" value="P:L-arginine biosynthetic process"/>
    <property type="evidence" value="ECO:0007669"/>
    <property type="project" value="UniProtKB-UniPathway"/>
</dbReference>
<dbReference type="GO" id="GO:0051259">
    <property type="term" value="P:protein complex oligomerization"/>
    <property type="evidence" value="ECO:0007669"/>
    <property type="project" value="InterPro"/>
</dbReference>
<dbReference type="GO" id="GO:1900079">
    <property type="term" value="P:regulation of arginine biosynthetic process"/>
    <property type="evidence" value="ECO:0007669"/>
    <property type="project" value="UniProtKB-UniRule"/>
</dbReference>
<dbReference type="GO" id="GO:0000821">
    <property type="term" value="P:regulation of arginine metabolic process"/>
    <property type="evidence" value="ECO:0000318"/>
    <property type="project" value="GO_Central"/>
</dbReference>
<dbReference type="Gene3D" id="3.30.1360.40">
    <property type="match status" value="1"/>
</dbReference>
<dbReference type="Gene3D" id="1.10.10.10">
    <property type="entry name" value="Winged helix-like DNA-binding domain superfamily/Winged helix DNA-binding domain"/>
    <property type="match status" value="1"/>
</dbReference>
<dbReference type="HAMAP" id="MF_00173">
    <property type="entry name" value="Arg_repressor"/>
    <property type="match status" value="1"/>
</dbReference>
<dbReference type="InterPro" id="IPR001669">
    <property type="entry name" value="Arg_repress"/>
</dbReference>
<dbReference type="InterPro" id="IPR020899">
    <property type="entry name" value="Arg_repress_C"/>
</dbReference>
<dbReference type="InterPro" id="IPR036251">
    <property type="entry name" value="Arg_repress_C_sf"/>
</dbReference>
<dbReference type="InterPro" id="IPR020900">
    <property type="entry name" value="Arg_repress_DNA-bd"/>
</dbReference>
<dbReference type="InterPro" id="IPR036388">
    <property type="entry name" value="WH-like_DNA-bd_sf"/>
</dbReference>
<dbReference type="InterPro" id="IPR036390">
    <property type="entry name" value="WH_DNA-bd_sf"/>
</dbReference>
<dbReference type="PANTHER" id="PTHR34471">
    <property type="entry name" value="ARGININE REPRESSOR"/>
    <property type="match status" value="1"/>
</dbReference>
<dbReference type="PANTHER" id="PTHR34471:SF1">
    <property type="entry name" value="ARGININE REPRESSOR"/>
    <property type="match status" value="1"/>
</dbReference>
<dbReference type="Pfam" id="PF01316">
    <property type="entry name" value="Arg_repressor"/>
    <property type="match status" value="1"/>
</dbReference>
<dbReference type="Pfam" id="PF02863">
    <property type="entry name" value="Arg_repressor_C"/>
    <property type="match status" value="1"/>
</dbReference>
<dbReference type="PRINTS" id="PR01467">
    <property type="entry name" value="ARGREPRESSOR"/>
</dbReference>
<dbReference type="SUPFAM" id="SSF55252">
    <property type="entry name" value="C-terminal domain of arginine repressor"/>
    <property type="match status" value="1"/>
</dbReference>
<dbReference type="SUPFAM" id="SSF46785">
    <property type="entry name" value="Winged helix' DNA-binding domain"/>
    <property type="match status" value="1"/>
</dbReference>
<accession>Q8A1A4</accession>